<comment type="function">
    <text evidence="1">In addition to polymerase activity, this DNA polymerase exhibits 3'-5' and 5'-3' exonuclease activity.</text>
</comment>
<comment type="catalytic activity">
    <reaction>
        <text>DNA(n) + a 2'-deoxyribonucleoside 5'-triphosphate = DNA(n+1) + diphosphate</text>
        <dbReference type="Rhea" id="RHEA:22508"/>
        <dbReference type="Rhea" id="RHEA-COMP:17339"/>
        <dbReference type="Rhea" id="RHEA-COMP:17340"/>
        <dbReference type="ChEBI" id="CHEBI:33019"/>
        <dbReference type="ChEBI" id="CHEBI:61560"/>
        <dbReference type="ChEBI" id="CHEBI:173112"/>
        <dbReference type="EC" id="2.7.7.7"/>
    </reaction>
</comment>
<comment type="subunit">
    <text evidence="1">Single-chain monomer with multiple functions.</text>
</comment>
<comment type="similarity">
    <text evidence="3">Belongs to the DNA polymerase type-A family.</text>
</comment>
<protein>
    <recommendedName>
        <fullName>DNA polymerase I</fullName>
        <shortName>POL I</shortName>
        <ecNumber>2.7.7.7</ecNumber>
    </recommendedName>
</protein>
<gene>
    <name type="primary">polA</name>
    <name type="ordered locus">SP_0032</name>
</gene>
<accession>P59199</accession>
<accession>P13252</accession>
<organism>
    <name type="scientific">Streptococcus pneumoniae serotype 4 (strain ATCC BAA-334 / TIGR4)</name>
    <dbReference type="NCBI Taxonomy" id="170187"/>
    <lineage>
        <taxon>Bacteria</taxon>
        <taxon>Bacillati</taxon>
        <taxon>Bacillota</taxon>
        <taxon>Bacilli</taxon>
        <taxon>Lactobacillales</taxon>
        <taxon>Streptococcaceae</taxon>
        <taxon>Streptococcus</taxon>
    </lineage>
</organism>
<proteinExistence type="inferred from homology"/>
<evidence type="ECO:0000250" key="1"/>
<evidence type="ECO:0000255" key="2"/>
<evidence type="ECO:0000305" key="3"/>
<dbReference type="EC" id="2.7.7.7"/>
<dbReference type="EMBL" id="AE005672">
    <property type="protein sequence ID" value="AAK74222.1"/>
    <property type="molecule type" value="Genomic_DNA"/>
</dbReference>
<dbReference type="PIR" id="E95003">
    <property type="entry name" value="E95003"/>
</dbReference>
<dbReference type="RefSeq" id="WP_001808750.1">
    <property type="nucleotide sequence ID" value="NC_003028.3"/>
</dbReference>
<dbReference type="SMR" id="P59199"/>
<dbReference type="PaxDb" id="170187-SP_0032"/>
<dbReference type="EnsemblBacteria" id="AAK74222">
    <property type="protein sequence ID" value="AAK74222"/>
    <property type="gene ID" value="SP_0032"/>
</dbReference>
<dbReference type="KEGG" id="spn:SP_0032"/>
<dbReference type="eggNOG" id="COG0258">
    <property type="taxonomic scope" value="Bacteria"/>
</dbReference>
<dbReference type="eggNOG" id="COG0749">
    <property type="taxonomic scope" value="Bacteria"/>
</dbReference>
<dbReference type="PhylomeDB" id="P59199"/>
<dbReference type="BioCyc" id="SPNE170187:G1FZB-37-MONOMER"/>
<dbReference type="Proteomes" id="UP000000585">
    <property type="component" value="Chromosome"/>
</dbReference>
<dbReference type="GO" id="GO:0008408">
    <property type="term" value="F:3'-5' exonuclease activity"/>
    <property type="evidence" value="ECO:0007669"/>
    <property type="project" value="InterPro"/>
</dbReference>
<dbReference type="GO" id="GO:0008409">
    <property type="term" value="F:5'-3' exonuclease activity"/>
    <property type="evidence" value="ECO:0007669"/>
    <property type="project" value="InterPro"/>
</dbReference>
<dbReference type="GO" id="GO:0003677">
    <property type="term" value="F:DNA binding"/>
    <property type="evidence" value="ECO:0007669"/>
    <property type="project" value="UniProtKB-KW"/>
</dbReference>
<dbReference type="GO" id="GO:0003887">
    <property type="term" value="F:DNA-directed DNA polymerase activity"/>
    <property type="evidence" value="ECO:0007669"/>
    <property type="project" value="UniProtKB-KW"/>
</dbReference>
<dbReference type="GO" id="GO:0006261">
    <property type="term" value="P:DNA-templated DNA replication"/>
    <property type="evidence" value="ECO:0007669"/>
    <property type="project" value="InterPro"/>
</dbReference>
<dbReference type="GO" id="GO:0006302">
    <property type="term" value="P:double-strand break repair"/>
    <property type="evidence" value="ECO:0007669"/>
    <property type="project" value="TreeGrafter"/>
</dbReference>
<dbReference type="CDD" id="cd08637">
    <property type="entry name" value="DNA_pol_A_pol_I_C"/>
    <property type="match status" value="1"/>
</dbReference>
<dbReference type="CDD" id="cd06140">
    <property type="entry name" value="DNA_polA_I_Bacillus_like_exo"/>
    <property type="match status" value="1"/>
</dbReference>
<dbReference type="CDD" id="cd09898">
    <property type="entry name" value="H3TH_53EXO"/>
    <property type="match status" value="1"/>
</dbReference>
<dbReference type="CDD" id="cd09859">
    <property type="entry name" value="PIN_53EXO"/>
    <property type="match status" value="1"/>
</dbReference>
<dbReference type="FunFam" id="1.10.150.20:FF:000002">
    <property type="entry name" value="DNA polymerase I"/>
    <property type="match status" value="1"/>
</dbReference>
<dbReference type="FunFam" id="1.10.150.20:FF:000003">
    <property type="entry name" value="DNA polymerase I"/>
    <property type="match status" value="1"/>
</dbReference>
<dbReference type="FunFam" id="1.20.1060.10:FF:000001">
    <property type="entry name" value="DNA polymerase I"/>
    <property type="match status" value="1"/>
</dbReference>
<dbReference type="FunFam" id="3.40.50.1010:FF:000001">
    <property type="entry name" value="DNA polymerase I"/>
    <property type="match status" value="1"/>
</dbReference>
<dbReference type="Gene3D" id="3.30.70.370">
    <property type="match status" value="1"/>
</dbReference>
<dbReference type="Gene3D" id="1.10.150.20">
    <property type="entry name" value="5' to 3' exonuclease, C-terminal subdomain"/>
    <property type="match status" value="2"/>
</dbReference>
<dbReference type="Gene3D" id="3.40.50.1010">
    <property type="entry name" value="5'-nuclease"/>
    <property type="match status" value="1"/>
</dbReference>
<dbReference type="Gene3D" id="3.30.420.10">
    <property type="entry name" value="Ribonuclease H-like superfamily/Ribonuclease H"/>
    <property type="match status" value="1"/>
</dbReference>
<dbReference type="Gene3D" id="1.20.1060.10">
    <property type="entry name" value="Taq DNA Polymerase, Chain T, domain 4"/>
    <property type="match status" value="1"/>
</dbReference>
<dbReference type="InterPro" id="IPR002562">
    <property type="entry name" value="3'-5'_exonuclease_dom"/>
</dbReference>
<dbReference type="InterPro" id="IPR020046">
    <property type="entry name" value="5-3_exonucl_a-hlix_arch_N"/>
</dbReference>
<dbReference type="InterPro" id="IPR002421">
    <property type="entry name" value="5-3_exonuclease"/>
</dbReference>
<dbReference type="InterPro" id="IPR036279">
    <property type="entry name" value="5-3_exonuclease_C_sf"/>
</dbReference>
<dbReference type="InterPro" id="IPR019760">
    <property type="entry name" value="DNA-dir_DNA_pol_A_CS"/>
</dbReference>
<dbReference type="InterPro" id="IPR001098">
    <property type="entry name" value="DNA-dir_DNA_pol_A_palm_dom"/>
</dbReference>
<dbReference type="InterPro" id="IPR043502">
    <property type="entry name" value="DNA/RNA_pol_sf"/>
</dbReference>
<dbReference type="InterPro" id="IPR054690">
    <property type="entry name" value="DNA_polI_exonuclease"/>
</dbReference>
<dbReference type="InterPro" id="IPR020045">
    <property type="entry name" value="DNA_polI_H3TH"/>
</dbReference>
<dbReference type="InterPro" id="IPR018320">
    <property type="entry name" value="DNA_polymerase_1"/>
</dbReference>
<dbReference type="InterPro" id="IPR002298">
    <property type="entry name" value="DNA_polymerase_A"/>
</dbReference>
<dbReference type="InterPro" id="IPR008918">
    <property type="entry name" value="HhH2"/>
</dbReference>
<dbReference type="InterPro" id="IPR029060">
    <property type="entry name" value="PIN-like_dom_sf"/>
</dbReference>
<dbReference type="InterPro" id="IPR012337">
    <property type="entry name" value="RNaseH-like_sf"/>
</dbReference>
<dbReference type="InterPro" id="IPR036397">
    <property type="entry name" value="RNaseH_sf"/>
</dbReference>
<dbReference type="NCBIfam" id="TIGR00593">
    <property type="entry name" value="pola"/>
    <property type="match status" value="1"/>
</dbReference>
<dbReference type="NCBIfam" id="NF004397">
    <property type="entry name" value="PRK05755.1"/>
    <property type="match status" value="1"/>
</dbReference>
<dbReference type="PANTHER" id="PTHR10133">
    <property type="entry name" value="DNA POLYMERASE I"/>
    <property type="match status" value="1"/>
</dbReference>
<dbReference type="PANTHER" id="PTHR10133:SF27">
    <property type="entry name" value="DNA POLYMERASE NU"/>
    <property type="match status" value="1"/>
</dbReference>
<dbReference type="Pfam" id="PF01367">
    <property type="entry name" value="5_3_exonuc"/>
    <property type="match status" value="1"/>
</dbReference>
<dbReference type="Pfam" id="PF02739">
    <property type="entry name" value="5_3_exonuc_N"/>
    <property type="match status" value="1"/>
</dbReference>
<dbReference type="Pfam" id="PF00476">
    <property type="entry name" value="DNA_pol_A"/>
    <property type="match status" value="1"/>
</dbReference>
<dbReference type="Pfam" id="PF22619">
    <property type="entry name" value="DNA_polI_exo1"/>
    <property type="match status" value="1"/>
</dbReference>
<dbReference type="PRINTS" id="PR00868">
    <property type="entry name" value="DNAPOLI"/>
</dbReference>
<dbReference type="SMART" id="SM00474">
    <property type="entry name" value="35EXOc"/>
    <property type="match status" value="1"/>
</dbReference>
<dbReference type="SMART" id="SM00475">
    <property type="entry name" value="53EXOc"/>
    <property type="match status" value="1"/>
</dbReference>
<dbReference type="SMART" id="SM00279">
    <property type="entry name" value="HhH2"/>
    <property type="match status" value="1"/>
</dbReference>
<dbReference type="SMART" id="SM00482">
    <property type="entry name" value="POLAc"/>
    <property type="match status" value="1"/>
</dbReference>
<dbReference type="SUPFAM" id="SSF47807">
    <property type="entry name" value="5' to 3' exonuclease, C-terminal subdomain"/>
    <property type="match status" value="1"/>
</dbReference>
<dbReference type="SUPFAM" id="SSF56672">
    <property type="entry name" value="DNA/RNA polymerases"/>
    <property type="match status" value="1"/>
</dbReference>
<dbReference type="SUPFAM" id="SSF88723">
    <property type="entry name" value="PIN domain-like"/>
    <property type="match status" value="1"/>
</dbReference>
<dbReference type="SUPFAM" id="SSF53098">
    <property type="entry name" value="Ribonuclease H-like"/>
    <property type="match status" value="1"/>
</dbReference>
<dbReference type="PROSITE" id="PS00447">
    <property type="entry name" value="DNA_POLYMERASE_A"/>
    <property type="match status" value="1"/>
</dbReference>
<feature type="chain" id="PRO_0000101253" description="DNA polymerase I">
    <location>
        <begin position="1"/>
        <end position="877"/>
    </location>
</feature>
<feature type="domain" description="5'-3' exonuclease" evidence="2">
    <location>
        <begin position="177"/>
        <end position="270"/>
    </location>
</feature>
<feature type="domain" description="3'-5' exonuclease" evidence="2">
    <location>
        <begin position="302"/>
        <end position="465"/>
    </location>
</feature>
<keyword id="KW-0227">DNA damage</keyword>
<keyword id="KW-0234">DNA repair</keyword>
<keyword id="KW-0235">DNA replication</keyword>
<keyword id="KW-0238">DNA-binding</keyword>
<keyword id="KW-0239">DNA-directed DNA polymerase</keyword>
<keyword id="KW-0269">Exonuclease</keyword>
<keyword id="KW-0378">Hydrolase</keyword>
<keyword id="KW-0540">Nuclease</keyword>
<keyword id="KW-0548">Nucleotidyltransferase</keyword>
<keyword id="KW-1185">Reference proteome</keyword>
<keyword id="KW-0808">Transferase</keyword>
<reference key="1">
    <citation type="journal article" date="2001" name="Science">
        <title>Complete genome sequence of a virulent isolate of Streptococcus pneumoniae.</title>
        <authorList>
            <person name="Tettelin H."/>
            <person name="Nelson K.E."/>
            <person name="Paulsen I.T."/>
            <person name="Eisen J.A."/>
            <person name="Read T.D."/>
            <person name="Peterson S.N."/>
            <person name="Heidelberg J.F."/>
            <person name="DeBoy R.T."/>
            <person name="Haft D.H."/>
            <person name="Dodson R.J."/>
            <person name="Durkin A.S."/>
            <person name="Gwinn M.L."/>
            <person name="Kolonay J.F."/>
            <person name="Nelson W.C."/>
            <person name="Peterson J.D."/>
            <person name="Umayam L.A."/>
            <person name="White O."/>
            <person name="Salzberg S.L."/>
            <person name="Lewis M.R."/>
            <person name="Radune D."/>
            <person name="Holtzapple E.K."/>
            <person name="Khouri H.M."/>
            <person name="Wolf A.M."/>
            <person name="Utterback T.R."/>
            <person name="Hansen C.L."/>
            <person name="McDonald L.A."/>
            <person name="Feldblyum T.V."/>
            <person name="Angiuoli S.V."/>
            <person name="Dickinson T."/>
            <person name="Hickey E.K."/>
            <person name="Holt I.E."/>
            <person name="Loftus B.J."/>
            <person name="Yang F."/>
            <person name="Smith H.O."/>
            <person name="Venter J.C."/>
            <person name="Dougherty B.A."/>
            <person name="Morrison D.A."/>
            <person name="Hollingshead S.K."/>
            <person name="Fraser C.M."/>
        </authorList>
    </citation>
    <scope>NUCLEOTIDE SEQUENCE [LARGE SCALE GENOMIC DNA]</scope>
    <source>
        <strain>ATCC BAA-334 / TIGR4</strain>
    </source>
</reference>
<name>DPO1_STRPN</name>
<sequence length="877" mass="99253">MDKKKLLLIDGSSVAFRAFFALYQQLDRFKNVAGLHTNAIYGFQLMLSHLLERVEPSHILVAFDAGKTTFRTEMYADYKGGRAKTPDEFREQFPFIRELLDHMGIRHYDLAQYEADDIIGTLDKLAEQDGFDITIVSGDKDLIQLTDEHTVVEISKKGVAEFEAFTPDYLMEEMGLTPAQFIDLKALMGDKSDNIPGVTKVGEKTGIKLLLEHGSLEGIYENIDGMKTSKMKENLINDKEQAFLSKTLATIDTKAPIAIGLEDLVYSGPDVENLGKFYDEMGFKQLKQALNVSSADVSESLDFTIVDQISQDMLSEESIFHFELFGENYHTDNLVGFVWSCGDKLYATDKLELLQDPIFKDFLEKTSLRVYDFKKVKVLLQRFGVDLQAPAFDIRLAKYLLSTVEDNEIATIASLYGQTYLVDDETFYGKGVKKAIPEREKFLEHLACKLAVLVETEPILLEKLSENGQLELLYDMEQPLAFVLAKMEIAGIMVKKETLLEMQAENELVIEKLTQEIYELAGEEFNVNSPKQLGVLLFEKLGLPLEYTKKTKTGYSTAVDVLERLAPIAPIVKKILDYRQIAKIQSTYVIGLQDWILADGKIHTRYVQDLTQTGRLSSVDPNLQNIPARLEQGRLIRKAFVPEWEDSVLLSSDYSQIELRVLAHISKDEHLIKAFQEGADIHTSTAMRVFGIERPDDVTANDRRNAKAVNFGVVYGISDFGLSNNLGISRKEAKAYIDTYFERFPGIKNYMDEVVREARDKGYVETLFKRRRELPDINSRNFNIRGFAERTAINSPIQGSAADILKIAMIQLDKALVAGGYQTKMLLQVHDEIVLEVPKSELVEMKKLVKQTMEEAIQLSVPLIADENEGATWYEAK</sequence>